<gene>
    <name evidence="1" type="primary">araG</name>
    <name type="ordered locus">SBO_1106</name>
</gene>
<sequence>MQQSTPYLSFRGIGKTFPGVKALTDISFDCYAGQVHALMGENGAGKSTLLKILSGNYAPTTGSVVINGQEMSFSDTTAALNAGVAIIYQELHLVPEMTVAENIYLGQLPHKGGIVNRSLLNYEAGLQLKHLGMDIDPDTPLKYLSIGQWQMVEIAKALARNAKIIAFDEPTSSLSAREIDNLFRVIRELRKEGRVILYVSHRMEEIFALSDAITVFKDGRYVKTFTDMQQVDHDALVQAMVGRDIGDIYGWQPRSYGEERLRLDAVKAPGVRTPISLAVRSGEIVGLFGLVGAGRSELMKGLFGGTQITAGQVYIDQQPIDIRKPSHAIAAGMMLCPEDRKAEGIIPVHSVRDNINISARRKHVLGGCVINNGWEENNADQHIRSLNIKTPGAEQLIMNLSGGNQQKAILGRWLSEEMKVILLDEPTRGIDVGAKHEIYNVIYALAAQGVAVLFASSDLPEVLGVADRIVVMREGEIAGELLHEQADERQALSLAMPKVSQAVA</sequence>
<feature type="chain" id="PRO_0000270478" description="Arabinose import ATP-binding protein AraG">
    <location>
        <begin position="1"/>
        <end position="504"/>
    </location>
</feature>
<feature type="domain" description="ABC transporter 1" evidence="1">
    <location>
        <begin position="8"/>
        <end position="243"/>
    </location>
</feature>
<feature type="domain" description="ABC transporter 2" evidence="1">
    <location>
        <begin position="256"/>
        <end position="499"/>
    </location>
</feature>
<feature type="binding site" evidence="1">
    <location>
        <begin position="40"/>
        <end position="47"/>
    </location>
    <ligand>
        <name>ATP</name>
        <dbReference type="ChEBI" id="CHEBI:30616"/>
    </ligand>
</feature>
<reference key="1">
    <citation type="journal article" date="2005" name="Nucleic Acids Res.">
        <title>Genome dynamics and diversity of Shigella species, the etiologic agents of bacillary dysentery.</title>
        <authorList>
            <person name="Yang F."/>
            <person name="Yang J."/>
            <person name="Zhang X."/>
            <person name="Chen L."/>
            <person name="Jiang Y."/>
            <person name="Yan Y."/>
            <person name="Tang X."/>
            <person name="Wang J."/>
            <person name="Xiong Z."/>
            <person name="Dong J."/>
            <person name="Xue Y."/>
            <person name="Zhu Y."/>
            <person name="Xu X."/>
            <person name="Sun L."/>
            <person name="Chen S."/>
            <person name="Nie H."/>
            <person name="Peng J."/>
            <person name="Xu J."/>
            <person name="Wang Y."/>
            <person name="Yuan Z."/>
            <person name="Wen Y."/>
            <person name="Yao Z."/>
            <person name="Shen Y."/>
            <person name="Qiang B."/>
            <person name="Hou Y."/>
            <person name="Yu J."/>
            <person name="Jin Q."/>
        </authorList>
    </citation>
    <scope>NUCLEOTIDE SEQUENCE [LARGE SCALE GENOMIC DNA]</scope>
    <source>
        <strain>Sb227</strain>
    </source>
</reference>
<proteinExistence type="inferred from homology"/>
<protein>
    <recommendedName>
        <fullName evidence="1">Arabinose import ATP-binding protein AraG</fullName>
        <ecNumber evidence="1">7.5.2.12</ecNumber>
    </recommendedName>
</protein>
<organism>
    <name type="scientific">Shigella boydii serotype 4 (strain Sb227)</name>
    <dbReference type="NCBI Taxonomy" id="300268"/>
    <lineage>
        <taxon>Bacteria</taxon>
        <taxon>Pseudomonadati</taxon>
        <taxon>Pseudomonadota</taxon>
        <taxon>Gammaproteobacteria</taxon>
        <taxon>Enterobacterales</taxon>
        <taxon>Enterobacteriaceae</taxon>
        <taxon>Shigella</taxon>
    </lineage>
</organism>
<keyword id="KW-0067">ATP-binding</keyword>
<keyword id="KW-0997">Cell inner membrane</keyword>
<keyword id="KW-1003">Cell membrane</keyword>
<keyword id="KW-0472">Membrane</keyword>
<keyword id="KW-0547">Nucleotide-binding</keyword>
<keyword id="KW-0677">Repeat</keyword>
<keyword id="KW-0762">Sugar transport</keyword>
<keyword id="KW-1278">Translocase</keyword>
<keyword id="KW-0813">Transport</keyword>
<name>ARAG_SHIBS</name>
<evidence type="ECO:0000255" key="1">
    <source>
        <dbReference type="HAMAP-Rule" id="MF_01721"/>
    </source>
</evidence>
<dbReference type="EC" id="7.5.2.12" evidence="1"/>
<dbReference type="EMBL" id="CP000036">
    <property type="protein sequence ID" value="ABB65747.1"/>
    <property type="molecule type" value="Genomic_DNA"/>
</dbReference>
<dbReference type="RefSeq" id="WP_001187813.1">
    <property type="nucleotide sequence ID" value="NC_007613.1"/>
</dbReference>
<dbReference type="SMR" id="Q322L1"/>
<dbReference type="KEGG" id="sbo:SBO_1106"/>
<dbReference type="HOGENOM" id="CLU_000604_92_3_6"/>
<dbReference type="Proteomes" id="UP000007067">
    <property type="component" value="Chromosome"/>
</dbReference>
<dbReference type="GO" id="GO:0005886">
    <property type="term" value="C:plasma membrane"/>
    <property type="evidence" value="ECO:0007669"/>
    <property type="project" value="UniProtKB-SubCell"/>
</dbReference>
<dbReference type="GO" id="GO:0015612">
    <property type="term" value="F:ABC-type L-arabinose transporter activity"/>
    <property type="evidence" value="ECO:0007669"/>
    <property type="project" value="UniProtKB-EC"/>
</dbReference>
<dbReference type="GO" id="GO:0005524">
    <property type="term" value="F:ATP binding"/>
    <property type="evidence" value="ECO:0007669"/>
    <property type="project" value="UniProtKB-KW"/>
</dbReference>
<dbReference type="GO" id="GO:0016887">
    <property type="term" value="F:ATP hydrolysis activity"/>
    <property type="evidence" value="ECO:0007669"/>
    <property type="project" value="InterPro"/>
</dbReference>
<dbReference type="CDD" id="cd03216">
    <property type="entry name" value="ABC_Carb_Monos_I"/>
    <property type="match status" value="1"/>
</dbReference>
<dbReference type="CDD" id="cd03215">
    <property type="entry name" value="ABC_Carb_Monos_II"/>
    <property type="match status" value="1"/>
</dbReference>
<dbReference type="FunFam" id="3.40.50.300:FF:000126">
    <property type="entry name" value="Galactose/methyl galactoside import ATP-binding protein MglA"/>
    <property type="match status" value="1"/>
</dbReference>
<dbReference type="FunFam" id="3.40.50.300:FF:000127">
    <property type="entry name" value="Ribose import ATP-binding protein RbsA"/>
    <property type="match status" value="1"/>
</dbReference>
<dbReference type="Gene3D" id="3.40.50.300">
    <property type="entry name" value="P-loop containing nucleotide triphosphate hydrolases"/>
    <property type="match status" value="2"/>
</dbReference>
<dbReference type="InterPro" id="IPR003593">
    <property type="entry name" value="AAA+_ATPase"/>
</dbReference>
<dbReference type="InterPro" id="IPR050107">
    <property type="entry name" value="ABC_carbohydrate_import_ATPase"/>
</dbReference>
<dbReference type="InterPro" id="IPR003439">
    <property type="entry name" value="ABC_transporter-like_ATP-bd"/>
</dbReference>
<dbReference type="InterPro" id="IPR017871">
    <property type="entry name" value="ABC_transporter-like_CS"/>
</dbReference>
<dbReference type="InterPro" id="IPR027417">
    <property type="entry name" value="P-loop_NTPase"/>
</dbReference>
<dbReference type="NCBIfam" id="NF008442">
    <property type="entry name" value="PRK11288.1"/>
    <property type="match status" value="1"/>
</dbReference>
<dbReference type="PANTHER" id="PTHR43790:SF6">
    <property type="entry name" value="ARABINOSE IMPORT ATP-BINDING PROTEIN ARAG"/>
    <property type="match status" value="1"/>
</dbReference>
<dbReference type="PANTHER" id="PTHR43790">
    <property type="entry name" value="CARBOHYDRATE TRANSPORT ATP-BINDING PROTEIN MG119-RELATED"/>
    <property type="match status" value="1"/>
</dbReference>
<dbReference type="Pfam" id="PF00005">
    <property type="entry name" value="ABC_tran"/>
    <property type="match status" value="2"/>
</dbReference>
<dbReference type="SMART" id="SM00382">
    <property type="entry name" value="AAA"/>
    <property type="match status" value="2"/>
</dbReference>
<dbReference type="SUPFAM" id="SSF52540">
    <property type="entry name" value="P-loop containing nucleoside triphosphate hydrolases"/>
    <property type="match status" value="2"/>
</dbReference>
<dbReference type="PROSITE" id="PS00211">
    <property type="entry name" value="ABC_TRANSPORTER_1"/>
    <property type="match status" value="1"/>
</dbReference>
<dbReference type="PROSITE" id="PS50893">
    <property type="entry name" value="ABC_TRANSPORTER_2"/>
    <property type="match status" value="2"/>
</dbReference>
<dbReference type="PROSITE" id="PS51268">
    <property type="entry name" value="ARAG"/>
    <property type="match status" value="1"/>
</dbReference>
<comment type="function">
    <text evidence="1">Part of the ABC transporter complex AraFGH involved in arabinose import. Responsible for energy coupling to the transport system.</text>
</comment>
<comment type="catalytic activity">
    <reaction evidence="1">
        <text>L-arabinose(out) + ATP + H2O = L-arabinose(in) + ADP + phosphate + H(+)</text>
        <dbReference type="Rhea" id="RHEA:30007"/>
        <dbReference type="ChEBI" id="CHEBI:15377"/>
        <dbReference type="ChEBI" id="CHEBI:15378"/>
        <dbReference type="ChEBI" id="CHEBI:17535"/>
        <dbReference type="ChEBI" id="CHEBI:30616"/>
        <dbReference type="ChEBI" id="CHEBI:43474"/>
        <dbReference type="ChEBI" id="CHEBI:456216"/>
        <dbReference type="EC" id="7.5.2.12"/>
    </reaction>
</comment>
<comment type="subunit">
    <text evidence="1">The complex is composed of two ATP-binding proteins (AraG), two transmembrane proteins (AraH) and a solute-binding protein (AraF).</text>
</comment>
<comment type="subcellular location">
    <subcellularLocation>
        <location evidence="1">Cell inner membrane</location>
        <topology evidence="1">Peripheral membrane protein</topology>
    </subcellularLocation>
</comment>
<comment type="similarity">
    <text evidence="1">Belongs to the ABC transporter superfamily. Arabinose importer (TC 3.A.1.2.2) family.</text>
</comment>
<accession>Q322L1</accession>